<gene>
    <name evidence="1" type="primary">proB</name>
    <name type="ordered locus">BMA10247_3261</name>
</gene>
<comment type="function">
    <text evidence="1">Catalyzes the transfer of a phosphate group to glutamate to form L-glutamate 5-phosphate.</text>
</comment>
<comment type="catalytic activity">
    <reaction evidence="1">
        <text>L-glutamate + ATP = L-glutamyl 5-phosphate + ADP</text>
        <dbReference type="Rhea" id="RHEA:14877"/>
        <dbReference type="ChEBI" id="CHEBI:29985"/>
        <dbReference type="ChEBI" id="CHEBI:30616"/>
        <dbReference type="ChEBI" id="CHEBI:58274"/>
        <dbReference type="ChEBI" id="CHEBI:456216"/>
        <dbReference type="EC" id="2.7.2.11"/>
    </reaction>
</comment>
<comment type="pathway">
    <text evidence="1">Amino-acid biosynthesis; L-proline biosynthesis; L-glutamate 5-semialdehyde from L-glutamate: step 1/2.</text>
</comment>
<comment type="subcellular location">
    <subcellularLocation>
        <location evidence="1">Cytoplasm</location>
    </subcellularLocation>
</comment>
<comment type="similarity">
    <text evidence="1">Belongs to the glutamate 5-kinase family.</text>
</comment>
<protein>
    <recommendedName>
        <fullName evidence="1">Glutamate 5-kinase</fullName>
        <ecNumber evidence="1">2.7.2.11</ecNumber>
    </recommendedName>
    <alternativeName>
        <fullName evidence="1">Gamma-glutamyl kinase</fullName>
        <shortName evidence="1">GK</shortName>
    </alternativeName>
</protein>
<reference key="1">
    <citation type="journal article" date="2010" name="Genome Biol. Evol.">
        <title>Continuing evolution of Burkholderia mallei through genome reduction and large-scale rearrangements.</title>
        <authorList>
            <person name="Losada L."/>
            <person name="Ronning C.M."/>
            <person name="DeShazer D."/>
            <person name="Woods D."/>
            <person name="Fedorova N."/>
            <person name="Kim H.S."/>
            <person name="Shabalina S.A."/>
            <person name="Pearson T.R."/>
            <person name="Brinkac L."/>
            <person name="Tan P."/>
            <person name="Nandi T."/>
            <person name="Crabtree J."/>
            <person name="Badger J."/>
            <person name="Beckstrom-Sternberg S."/>
            <person name="Saqib M."/>
            <person name="Schutzer S.E."/>
            <person name="Keim P."/>
            <person name="Nierman W.C."/>
        </authorList>
    </citation>
    <scope>NUCLEOTIDE SEQUENCE [LARGE SCALE GENOMIC DNA]</scope>
    <source>
        <strain>NCTC 10247</strain>
    </source>
</reference>
<sequence length="372" mass="39233">MRSIIADSKRLVVKVGSSLVTNDGRGLDHDAIGRWAAQIAALRGAGKEVVLVSSGAIAEGMQRLGWSKRPREIDELQAAAAVGQMGLAQVYESRFAEHGIRTAQILLTHADLADRERYLNARSTLLTLLRLGVVPIINENDTVVTDEIKFGDNDTLGALVANLIEGDTLVILTDQPGLFTADPRKDPGATLVAEASAGAPELEAMAGGAGSSIGRGGMLTKILAAKRAAHSGANTVIASGRERDVLVRLAAGEAIGTQLIARTARMAARKQWMADHLQVRGHVVIDAGAVDKLTAGGKSLLPIGVVAVQGVFARGEVIACVDDTGREVARGITNYSSAETKLIQRKPSGEIETVLGYMLEPELIHRDNLVLV</sequence>
<proteinExistence type="inferred from homology"/>
<accession>A3MR91</accession>
<dbReference type="EC" id="2.7.2.11" evidence="1"/>
<dbReference type="EMBL" id="CP000548">
    <property type="protein sequence ID" value="ABO04460.1"/>
    <property type="molecule type" value="Genomic_DNA"/>
</dbReference>
<dbReference type="RefSeq" id="WP_004194262.1">
    <property type="nucleotide sequence ID" value="NZ_CP007802.1"/>
</dbReference>
<dbReference type="SMR" id="A3MR91"/>
<dbReference type="GeneID" id="93061602"/>
<dbReference type="KEGG" id="bmaz:BM44_107"/>
<dbReference type="KEGG" id="bmn:BMA10247_3261"/>
<dbReference type="PATRIC" id="fig|320389.8.peg.115"/>
<dbReference type="UniPathway" id="UPA00098">
    <property type="reaction ID" value="UER00359"/>
</dbReference>
<dbReference type="GO" id="GO:0005829">
    <property type="term" value="C:cytosol"/>
    <property type="evidence" value="ECO:0007669"/>
    <property type="project" value="TreeGrafter"/>
</dbReference>
<dbReference type="GO" id="GO:0005524">
    <property type="term" value="F:ATP binding"/>
    <property type="evidence" value="ECO:0007669"/>
    <property type="project" value="UniProtKB-KW"/>
</dbReference>
<dbReference type="GO" id="GO:0004349">
    <property type="term" value="F:glutamate 5-kinase activity"/>
    <property type="evidence" value="ECO:0007669"/>
    <property type="project" value="UniProtKB-UniRule"/>
</dbReference>
<dbReference type="GO" id="GO:0003723">
    <property type="term" value="F:RNA binding"/>
    <property type="evidence" value="ECO:0007669"/>
    <property type="project" value="InterPro"/>
</dbReference>
<dbReference type="GO" id="GO:0055129">
    <property type="term" value="P:L-proline biosynthetic process"/>
    <property type="evidence" value="ECO:0007669"/>
    <property type="project" value="UniProtKB-UniRule"/>
</dbReference>
<dbReference type="CDD" id="cd04242">
    <property type="entry name" value="AAK_G5K_ProB"/>
    <property type="match status" value="1"/>
</dbReference>
<dbReference type="CDD" id="cd21157">
    <property type="entry name" value="PUA_G5K"/>
    <property type="match status" value="1"/>
</dbReference>
<dbReference type="FunFam" id="2.30.130.10:FF:000007">
    <property type="entry name" value="Glutamate 5-kinase"/>
    <property type="match status" value="1"/>
</dbReference>
<dbReference type="FunFam" id="3.40.1160.10:FF:000018">
    <property type="entry name" value="Glutamate 5-kinase"/>
    <property type="match status" value="1"/>
</dbReference>
<dbReference type="Gene3D" id="3.40.1160.10">
    <property type="entry name" value="Acetylglutamate kinase-like"/>
    <property type="match status" value="1"/>
</dbReference>
<dbReference type="Gene3D" id="2.30.130.10">
    <property type="entry name" value="PUA domain"/>
    <property type="match status" value="1"/>
</dbReference>
<dbReference type="HAMAP" id="MF_00456">
    <property type="entry name" value="ProB"/>
    <property type="match status" value="1"/>
</dbReference>
<dbReference type="InterPro" id="IPR036393">
    <property type="entry name" value="AceGlu_kinase-like_sf"/>
</dbReference>
<dbReference type="InterPro" id="IPR001048">
    <property type="entry name" value="Asp/Glu/Uridylate_kinase"/>
</dbReference>
<dbReference type="InterPro" id="IPR041739">
    <property type="entry name" value="G5K_ProB"/>
</dbReference>
<dbReference type="InterPro" id="IPR001057">
    <property type="entry name" value="Glu/AcGlu_kinase"/>
</dbReference>
<dbReference type="InterPro" id="IPR011529">
    <property type="entry name" value="Glu_5kinase"/>
</dbReference>
<dbReference type="InterPro" id="IPR005715">
    <property type="entry name" value="Glu_5kinase/COase_Synthase"/>
</dbReference>
<dbReference type="InterPro" id="IPR019797">
    <property type="entry name" value="Glutamate_5-kinase_CS"/>
</dbReference>
<dbReference type="InterPro" id="IPR002478">
    <property type="entry name" value="PUA"/>
</dbReference>
<dbReference type="InterPro" id="IPR015947">
    <property type="entry name" value="PUA-like_sf"/>
</dbReference>
<dbReference type="InterPro" id="IPR036974">
    <property type="entry name" value="PUA_sf"/>
</dbReference>
<dbReference type="NCBIfam" id="TIGR01027">
    <property type="entry name" value="proB"/>
    <property type="match status" value="1"/>
</dbReference>
<dbReference type="PANTHER" id="PTHR43654">
    <property type="entry name" value="GLUTAMATE 5-KINASE"/>
    <property type="match status" value="1"/>
</dbReference>
<dbReference type="PANTHER" id="PTHR43654:SF1">
    <property type="entry name" value="ISOPENTENYL PHOSPHATE KINASE"/>
    <property type="match status" value="1"/>
</dbReference>
<dbReference type="Pfam" id="PF00696">
    <property type="entry name" value="AA_kinase"/>
    <property type="match status" value="1"/>
</dbReference>
<dbReference type="Pfam" id="PF01472">
    <property type="entry name" value="PUA"/>
    <property type="match status" value="1"/>
</dbReference>
<dbReference type="PIRSF" id="PIRSF000729">
    <property type="entry name" value="GK"/>
    <property type="match status" value="1"/>
</dbReference>
<dbReference type="PRINTS" id="PR00474">
    <property type="entry name" value="GLU5KINASE"/>
</dbReference>
<dbReference type="SMART" id="SM00359">
    <property type="entry name" value="PUA"/>
    <property type="match status" value="1"/>
</dbReference>
<dbReference type="SUPFAM" id="SSF53633">
    <property type="entry name" value="Carbamate kinase-like"/>
    <property type="match status" value="1"/>
</dbReference>
<dbReference type="SUPFAM" id="SSF88697">
    <property type="entry name" value="PUA domain-like"/>
    <property type="match status" value="1"/>
</dbReference>
<dbReference type="PROSITE" id="PS00902">
    <property type="entry name" value="GLUTAMATE_5_KINASE"/>
    <property type="match status" value="1"/>
</dbReference>
<dbReference type="PROSITE" id="PS50890">
    <property type="entry name" value="PUA"/>
    <property type="match status" value="1"/>
</dbReference>
<keyword id="KW-0028">Amino-acid biosynthesis</keyword>
<keyword id="KW-0067">ATP-binding</keyword>
<keyword id="KW-0963">Cytoplasm</keyword>
<keyword id="KW-0418">Kinase</keyword>
<keyword id="KW-0547">Nucleotide-binding</keyword>
<keyword id="KW-0641">Proline biosynthesis</keyword>
<keyword id="KW-0808">Transferase</keyword>
<name>PROB_BURM7</name>
<evidence type="ECO:0000255" key="1">
    <source>
        <dbReference type="HAMAP-Rule" id="MF_00456"/>
    </source>
</evidence>
<organism>
    <name type="scientific">Burkholderia mallei (strain NCTC 10247)</name>
    <dbReference type="NCBI Taxonomy" id="320389"/>
    <lineage>
        <taxon>Bacteria</taxon>
        <taxon>Pseudomonadati</taxon>
        <taxon>Pseudomonadota</taxon>
        <taxon>Betaproteobacteria</taxon>
        <taxon>Burkholderiales</taxon>
        <taxon>Burkholderiaceae</taxon>
        <taxon>Burkholderia</taxon>
        <taxon>pseudomallei group</taxon>
    </lineage>
</organism>
<feature type="chain" id="PRO_1000081043" description="Glutamate 5-kinase">
    <location>
        <begin position="1"/>
        <end position="372"/>
    </location>
</feature>
<feature type="domain" description="PUA" evidence="1">
    <location>
        <begin position="280"/>
        <end position="358"/>
    </location>
</feature>
<feature type="binding site" evidence="1">
    <location>
        <position position="14"/>
    </location>
    <ligand>
        <name>ATP</name>
        <dbReference type="ChEBI" id="CHEBI:30616"/>
    </ligand>
</feature>
<feature type="binding site" evidence="1">
    <location>
        <position position="54"/>
    </location>
    <ligand>
        <name>substrate</name>
    </ligand>
</feature>
<feature type="binding site" evidence="1">
    <location>
        <position position="141"/>
    </location>
    <ligand>
        <name>substrate</name>
    </ligand>
</feature>
<feature type="binding site" evidence="1">
    <location>
        <position position="153"/>
    </location>
    <ligand>
        <name>substrate</name>
    </ligand>
</feature>
<feature type="binding site" evidence="1">
    <location>
        <begin position="173"/>
        <end position="174"/>
    </location>
    <ligand>
        <name>ATP</name>
        <dbReference type="ChEBI" id="CHEBI:30616"/>
    </ligand>
</feature>